<evidence type="ECO:0000255" key="1">
    <source>
        <dbReference type="HAMAP-Rule" id="MF_00175"/>
    </source>
</evidence>
<evidence type="ECO:0000255" key="2">
    <source>
        <dbReference type="PROSITE-ProRule" id="PRU01250"/>
    </source>
</evidence>
<accession>Q92QQ2</accession>
<dbReference type="EMBL" id="AL591688">
    <property type="protein sequence ID" value="CAC45835.1"/>
    <property type="molecule type" value="Genomic_DNA"/>
</dbReference>
<dbReference type="RefSeq" id="NP_385362.1">
    <property type="nucleotide sequence ID" value="NC_003047.1"/>
</dbReference>
<dbReference type="RefSeq" id="WP_003531807.1">
    <property type="nucleotide sequence ID" value="NC_003047.1"/>
</dbReference>
<dbReference type="SMR" id="Q92QQ2"/>
<dbReference type="EnsemblBacteria" id="CAC45835">
    <property type="protein sequence ID" value="CAC45835"/>
    <property type="gene ID" value="SMc01904"/>
</dbReference>
<dbReference type="GeneID" id="89575576"/>
<dbReference type="KEGG" id="sme:SMc01904"/>
<dbReference type="PATRIC" id="fig|266834.11.peg.2670"/>
<dbReference type="eggNOG" id="COG1219">
    <property type="taxonomic scope" value="Bacteria"/>
</dbReference>
<dbReference type="HOGENOM" id="CLU_014218_8_2_5"/>
<dbReference type="OrthoDB" id="9804062at2"/>
<dbReference type="Proteomes" id="UP000001976">
    <property type="component" value="Chromosome"/>
</dbReference>
<dbReference type="GO" id="GO:0009376">
    <property type="term" value="C:HslUV protease complex"/>
    <property type="evidence" value="ECO:0007669"/>
    <property type="project" value="TreeGrafter"/>
</dbReference>
<dbReference type="GO" id="GO:0005524">
    <property type="term" value="F:ATP binding"/>
    <property type="evidence" value="ECO:0007669"/>
    <property type="project" value="UniProtKB-UniRule"/>
</dbReference>
<dbReference type="GO" id="GO:0016887">
    <property type="term" value="F:ATP hydrolysis activity"/>
    <property type="evidence" value="ECO:0007669"/>
    <property type="project" value="InterPro"/>
</dbReference>
<dbReference type="GO" id="GO:0140662">
    <property type="term" value="F:ATP-dependent protein folding chaperone"/>
    <property type="evidence" value="ECO:0007669"/>
    <property type="project" value="InterPro"/>
</dbReference>
<dbReference type="GO" id="GO:0046983">
    <property type="term" value="F:protein dimerization activity"/>
    <property type="evidence" value="ECO:0007669"/>
    <property type="project" value="InterPro"/>
</dbReference>
<dbReference type="GO" id="GO:0051082">
    <property type="term" value="F:unfolded protein binding"/>
    <property type="evidence" value="ECO:0007669"/>
    <property type="project" value="UniProtKB-UniRule"/>
</dbReference>
<dbReference type="GO" id="GO:0008270">
    <property type="term" value="F:zinc ion binding"/>
    <property type="evidence" value="ECO:0007669"/>
    <property type="project" value="InterPro"/>
</dbReference>
<dbReference type="GO" id="GO:0051301">
    <property type="term" value="P:cell division"/>
    <property type="evidence" value="ECO:0007669"/>
    <property type="project" value="TreeGrafter"/>
</dbReference>
<dbReference type="GO" id="GO:0051603">
    <property type="term" value="P:proteolysis involved in protein catabolic process"/>
    <property type="evidence" value="ECO:0007669"/>
    <property type="project" value="TreeGrafter"/>
</dbReference>
<dbReference type="CDD" id="cd19497">
    <property type="entry name" value="RecA-like_ClpX"/>
    <property type="match status" value="1"/>
</dbReference>
<dbReference type="FunFam" id="1.10.8.60:FF:000002">
    <property type="entry name" value="ATP-dependent Clp protease ATP-binding subunit ClpX"/>
    <property type="match status" value="1"/>
</dbReference>
<dbReference type="FunFam" id="3.40.50.300:FF:000005">
    <property type="entry name" value="ATP-dependent Clp protease ATP-binding subunit ClpX"/>
    <property type="match status" value="1"/>
</dbReference>
<dbReference type="Gene3D" id="1.10.8.60">
    <property type="match status" value="1"/>
</dbReference>
<dbReference type="Gene3D" id="6.20.220.10">
    <property type="entry name" value="ClpX chaperone, C4-type zinc finger domain"/>
    <property type="match status" value="1"/>
</dbReference>
<dbReference type="Gene3D" id="3.40.50.300">
    <property type="entry name" value="P-loop containing nucleotide triphosphate hydrolases"/>
    <property type="match status" value="1"/>
</dbReference>
<dbReference type="HAMAP" id="MF_00175">
    <property type="entry name" value="ClpX"/>
    <property type="match status" value="1"/>
</dbReference>
<dbReference type="InterPro" id="IPR003593">
    <property type="entry name" value="AAA+_ATPase"/>
</dbReference>
<dbReference type="InterPro" id="IPR050052">
    <property type="entry name" value="ATP-dep_Clp_protease_ClpX"/>
</dbReference>
<dbReference type="InterPro" id="IPR003959">
    <property type="entry name" value="ATPase_AAA_core"/>
</dbReference>
<dbReference type="InterPro" id="IPR019489">
    <property type="entry name" value="Clp_ATPase_C"/>
</dbReference>
<dbReference type="InterPro" id="IPR004487">
    <property type="entry name" value="Clp_protease_ATP-bd_su_ClpX"/>
</dbReference>
<dbReference type="InterPro" id="IPR046425">
    <property type="entry name" value="ClpX_bact"/>
</dbReference>
<dbReference type="InterPro" id="IPR027417">
    <property type="entry name" value="P-loop_NTPase"/>
</dbReference>
<dbReference type="InterPro" id="IPR010603">
    <property type="entry name" value="Znf_CppX_C4"/>
</dbReference>
<dbReference type="InterPro" id="IPR038366">
    <property type="entry name" value="Znf_CppX_C4_sf"/>
</dbReference>
<dbReference type="NCBIfam" id="TIGR00382">
    <property type="entry name" value="clpX"/>
    <property type="match status" value="1"/>
</dbReference>
<dbReference type="NCBIfam" id="NF003745">
    <property type="entry name" value="PRK05342.1"/>
    <property type="match status" value="1"/>
</dbReference>
<dbReference type="PANTHER" id="PTHR48102:SF7">
    <property type="entry name" value="ATP-DEPENDENT CLP PROTEASE ATP-BINDING SUBUNIT CLPX-LIKE, MITOCHONDRIAL"/>
    <property type="match status" value="1"/>
</dbReference>
<dbReference type="PANTHER" id="PTHR48102">
    <property type="entry name" value="ATP-DEPENDENT CLP PROTEASE ATP-BINDING SUBUNIT CLPX-LIKE, MITOCHONDRIAL-RELATED"/>
    <property type="match status" value="1"/>
</dbReference>
<dbReference type="Pfam" id="PF07724">
    <property type="entry name" value="AAA_2"/>
    <property type="match status" value="1"/>
</dbReference>
<dbReference type="Pfam" id="PF10431">
    <property type="entry name" value="ClpB_D2-small"/>
    <property type="match status" value="1"/>
</dbReference>
<dbReference type="Pfam" id="PF06689">
    <property type="entry name" value="zf-C4_ClpX"/>
    <property type="match status" value="1"/>
</dbReference>
<dbReference type="SMART" id="SM00382">
    <property type="entry name" value="AAA"/>
    <property type="match status" value="1"/>
</dbReference>
<dbReference type="SMART" id="SM01086">
    <property type="entry name" value="ClpB_D2-small"/>
    <property type="match status" value="1"/>
</dbReference>
<dbReference type="SMART" id="SM00994">
    <property type="entry name" value="zf-C4_ClpX"/>
    <property type="match status" value="1"/>
</dbReference>
<dbReference type="SUPFAM" id="SSF57716">
    <property type="entry name" value="Glucocorticoid receptor-like (DNA-binding domain)"/>
    <property type="match status" value="1"/>
</dbReference>
<dbReference type="SUPFAM" id="SSF52540">
    <property type="entry name" value="P-loop containing nucleoside triphosphate hydrolases"/>
    <property type="match status" value="1"/>
</dbReference>
<dbReference type="PROSITE" id="PS51902">
    <property type="entry name" value="CLPX_ZB"/>
    <property type="match status" value="1"/>
</dbReference>
<proteinExistence type="inferred from homology"/>
<organism>
    <name type="scientific">Rhizobium meliloti (strain 1021)</name>
    <name type="common">Ensifer meliloti</name>
    <name type="synonym">Sinorhizobium meliloti</name>
    <dbReference type="NCBI Taxonomy" id="266834"/>
    <lineage>
        <taxon>Bacteria</taxon>
        <taxon>Pseudomonadati</taxon>
        <taxon>Pseudomonadota</taxon>
        <taxon>Alphaproteobacteria</taxon>
        <taxon>Hyphomicrobiales</taxon>
        <taxon>Rhizobiaceae</taxon>
        <taxon>Sinorhizobium/Ensifer group</taxon>
        <taxon>Sinorhizobium</taxon>
    </lineage>
</organism>
<name>CLPX_RHIME</name>
<feature type="chain" id="PRO_0000160409" description="ATP-dependent Clp protease ATP-binding subunit ClpX">
    <location>
        <begin position="1"/>
        <end position="425"/>
    </location>
</feature>
<feature type="domain" description="ClpX-type ZB" evidence="2">
    <location>
        <begin position="6"/>
        <end position="59"/>
    </location>
</feature>
<feature type="binding site" evidence="2">
    <location>
        <position position="18"/>
    </location>
    <ligand>
        <name>Zn(2+)</name>
        <dbReference type="ChEBI" id="CHEBI:29105"/>
    </ligand>
</feature>
<feature type="binding site" evidence="2">
    <location>
        <position position="21"/>
    </location>
    <ligand>
        <name>Zn(2+)</name>
        <dbReference type="ChEBI" id="CHEBI:29105"/>
    </ligand>
</feature>
<feature type="binding site" evidence="2">
    <location>
        <position position="40"/>
    </location>
    <ligand>
        <name>Zn(2+)</name>
        <dbReference type="ChEBI" id="CHEBI:29105"/>
    </ligand>
</feature>
<feature type="binding site" evidence="2">
    <location>
        <position position="43"/>
    </location>
    <ligand>
        <name>Zn(2+)</name>
        <dbReference type="ChEBI" id="CHEBI:29105"/>
    </ligand>
</feature>
<feature type="binding site" evidence="1">
    <location>
        <begin position="122"/>
        <end position="129"/>
    </location>
    <ligand>
        <name>ATP</name>
        <dbReference type="ChEBI" id="CHEBI:30616"/>
    </ligand>
</feature>
<keyword id="KW-0067">ATP-binding</keyword>
<keyword id="KW-0143">Chaperone</keyword>
<keyword id="KW-0479">Metal-binding</keyword>
<keyword id="KW-0547">Nucleotide-binding</keyword>
<keyword id="KW-1185">Reference proteome</keyword>
<keyword id="KW-0862">Zinc</keyword>
<protein>
    <recommendedName>
        <fullName evidence="1">ATP-dependent Clp protease ATP-binding subunit ClpX</fullName>
    </recommendedName>
</protein>
<gene>
    <name evidence="1" type="primary">clpX</name>
    <name type="ordered locus">R01256</name>
    <name type="ORF">SMc01904</name>
</gene>
<comment type="function">
    <text evidence="1">ATP-dependent specificity component of the Clp protease. It directs the protease to specific substrates. Can perform chaperone functions in the absence of ClpP.</text>
</comment>
<comment type="subunit">
    <text evidence="1">Component of the ClpX-ClpP complex. Forms a hexameric ring that, in the presence of ATP, binds to fourteen ClpP subunits assembled into a disk-like structure with a central cavity, resembling the structure of eukaryotic proteasomes.</text>
</comment>
<comment type="similarity">
    <text evidence="1">Belongs to the ClpX chaperone family.</text>
</comment>
<reference key="1">
    <citation type="journal article" date="2001" name="Proc. Natl. Acad. Sci. U.S.A.">
        <title>Analysis of the chromosome sequence of the legume symbiont Sinorhizobium meliloti strain 1021.</title>
        <authorList>
            <person name="Capela D."/>
            <person name="Barloy-Hubler F."/>
            <person name="Gouzy J."/>
            <person name="Bothe G."/>
            <person name="Ampe F."/>
            <person name="Batut J."/>
            <person name="Boistard P."/>
            <person name="Becker A."/>
            <person name="Boutry M."/>
            <person name="Cadieu E."/>
            <person name="Dreano S."/>
            <person name="Gloux S."/>
            <person name="Godrie T."/>
            <person name="Goffeau A."/>
            <person name="Kahn D."/>
            <person name="Kiss E."/>
            <person name="Lelaure V."/>
            <person name="Masuy D."/>
            <person name="Pohl T."/>
            <person name="Portetelle D."/>
            <person name="Puehler A."/>
            <person name="Purnelle B."/>
            <person name="Ramsperger U."/>
            <person name="Renard C."/>
            <person name="Thebault P."/>
            <person name="Vandenbol M."/>
            <person name="Weidner S."/>
            <person name="Galibert F."/>
        </authorList>
    </citation>
    <scope>NUCLEOTIDE SEQUENCE [LARGE SCALE GENOMIC DNA]</scope>
    <source>
        <strain>1021</strain>
    </source>
</reference>
<reference key="2">
    <citation type="journal article" date="2001" name="Science">
        <title>The composite genome of the legume symbiont Sinorhizobium meliloti.</title>
        <authorList>
            <person name="Galibert F."/>
            <person name="Finan T.M."/>
            <person name="Long S.R."/>
            <person name="Puehler A."/>
            <person name="Abola P."/>
            <person name="Ampe F."/>
            <person name="Barloy-Hubler F."/>
            <person name="Barnett M.J."/>
            <person name="Becker A."/>
            <person name="Boistard P."/>
            <person name="Bothe G."/>
            <person name="Boutry M."/>
            <person name="Bowser L."/>
            <person name="Buhrmester J."/>
            <person name="Cadieu E."/>
            <person name="Capela D."/>
            <person name="Chain P."/>
            <person name="Cowie A."/>
            <person name="Davis R.W."/>
            <person name="Dreano S."/>
            <person name="Federspiel N.A."/>
            <person name="Fisher R.F."/>
            <person name="Gloux S."/>
            <person name="Godrie T."/>
            <person name="Goffeau A."/>
            <person name="Golding B."/>
            <person name="Gouzy J."/>
            <person name="Gurjal M."/>
            <person name="Hernandez-Lucas I."/>
            <person name="Hong A."/>
            <person name="Huizar L."/>
            <person name="Hyman R.W."/>
            <person name="Jones T."/>
            <person name="Kahn D."/>
            <person name="Kahn M.L."/>
            <person name="Kalman S."/>
            <person name="Keating D.H."/>
            <person name="Kiss E."/>
            <person name="Komp C."/>
            <person name="Lelaure V."/>
            <person name="Masuy D."/>
            <person name="Palm C."/>
            <person name="Peck M.C."/>
            <person name="Pohl T.M."/>
            <person name="Portetelle D."/>
            <person name="Purnelle B."/>
            <person name="Ramsperger U."/>
            <person name="Surzycki R."/>
            <person name="Thebault P."/>
            <person name="Vandenbol M."/>
            <person name="Vorhoelter F.J."/>
            <person name="Weidner S."/>
            <person name="Wells D.H."/>
            <person name="Wong K."/>
            <person name="Yeh K.-C."/>
            <person name="Batut J."/>
        </authorList>
    </citation>
    <scope>NUCLEOTIDE SEQUENCE [LARGE SCALE GENOMIC DNA]</scope>
    <source>
        <strain>1021</strain>
    </source>
</reference>
<sequence length="425" mass="46995">MSKVSGSNGGDSKNTLYCSFCGKSQHEVRKLIAGPTVFICDECVELCMDIIREENKTSMVKSRDGVPTPQEIIKVLDEYVIGQQQAKRILSVAVHNHYKRLAHAAKSSDVELAKSNIMLVGPTGCGKTYLAQTLARIIDVPFTMADATTLTEAGYVGEDVENIILKLLQAADYNVERAQRGIVYIDEVDKISRKSDNPSITRDVSGEGVQQALLKIMEGTVASVPPQGGRKHPQQEFLQVDTTNILFICGGAFAGLDKIISARGEKTSIGFGATVRAPEDRRVGEVLRELEPEDLVKFGLIPEFIGRLPVLATLEDLDEDALIQILSEPKNALVKQYQRLFEMEDVELNFHEDALREIARRAIVRKTGARGLRSIMEKILLDTMFELPTLEGVREVVISDEVVKGTARPLYIYSERSEEKTNVSA</sequence>